<gene>
    <name evidence="1" type="primary">rplB</name>
    <name type="ordered locus">TWT_551</name>
</gene>
<keyword id="KW-1185">Reference proteome</keyword>
<keyword id="KW-0687">Ribonucleoprotein</keyword>
<keyword id="KW-0689">Ribosomal protein</keyword>
<keyword id="KW-0694">RNA-binding</keyword>
<keyword id="KW-0699">rRNA-binding</keyword>
<name>RL2_TROWT</name>
<accession>Q83FY9</accession>
<comment type="function">
    <text evidence="1">One of the primary rRNA binding proteins. Required for association of the 30S and 50S subunits to form the 70S ribosome, for tRNA binding and peptide bond formation. It has been suggested to have peptidyltransferase activity; this is somewhat controversial. Makes several contacts with the 16S rRNA in the 70S ribosome.</text>
</comment>
<comment type="subunit">
    <text evidence="1">Part of the 50S ribosomal subunit. Forms a bridge to the 30S subunit in the 70S ribosome.</text>
</comment>
<comment type="similarity">
    <text evidence="1">Belongs to the universal ribosomal protein uL2 family.</text>
</comment>
<proteinExistence type="inferred from homology"/>
<protein>
    <recommendedName>
        <fullName evidence="1">Large ribosomal subunit protein uL2</fullName>
    </recommendedName>
    <alternativeName>
        <fullName evidence="3">50S ribosomal protein L2</fullName>
    </alternativeName>
</protein>
<sequence length="277" mass="30102">MAVRKSNPLTPARRGMSFSDFAEITRATPHKSLLSKLSKTGGRNNHGRITARHIGGGHKRRYRLVDFRRSDKDGVKAKVAHIEYDPNRTARIALLHFLDGAKRYILAPSGLKQGDVVESGSSADIRPGNSLCIRDIPVGTILHAVELRPGQGAKLARSAGSSVRLSAKDGDFAILKLPSGEIRMVSLSCRATIGEVGNGQRLNVSLGKAGRSRWCGVRPSVRGVAMNPVDHPHGGGEGKTSGGRHPVSPWGRPEGKTRRANKPSDRFIIRRKSRKRR</sequence>
<evidence type="ECO:0000255" key="1">
    <source>
        <dbReference type="HAMAP-Rule" id="MF_01320"/>
    </source>
</evidence>
<evidence type="ECO:0000256" key="2">
    <source>
        <dbReference type="SAM" id="MobiDB-lite"/>
    </source>
</evidence>
<evidence type="ECO:0000305" key="3"/>
<feature type="chain" id="PRO_0000129645" description="Large ribosomal subunit protein uL2">
    <location>
        <begin position="1"/>
        <end position="277"/>
    </location>
</feature>
<feature type="region of interest" description="Disordered" evidence="2">
    <location>
        <begin position="225"/>
        <end position="277"/>
    </location>
</feature>
<feature type="compositionally biased region" description="Basic and acidic residues" evidence="2">
    <location>
        <begin position="253"/>
        <end position="268"/>
    </location>
</feature>
<organism>
    <name type="scientific">Tropheryma whipplei (strain Twist)</name>
    <name type="common">Whipple's bacillus</name>
    <dbReference type="NCBI Taxonomy" id="203267"/>
    <lineage>
        <taxon>Bacteria</taxon>
        <taxon>Bacillati</taxon>
        <taxon>Actinomycetota</taxon>
        <taxon>Actinomycetes</taxon>
        <taxon>Micrococcales</taxon>
        <taxon>Tropherymataceae</taxon>
        <taxon>Tropheryma</taxon>
    </lineage>
</organism>
<reference key="1">
    <citation type="journal article" date="2003" name="Genome Res.">
        <title>Tropheryma whipplei twist: a human pathogenic Actinobacteria with a reduced genome.</title>
        <authorList>
            <person name="Raoult D."/>
            <person name="Ogata H."/>
            <person name="Audic S."/>
            <person name="Robert C."/>
            <person name="Suhre K."/>
            <person name="Drancourt M."/>
            <person name="Claverie J.-M."/>
        </authorList>
    </citation>
    <scope>NUCLEOTIDE SEQUENCE [LARGE SCALE GENOMIC DNA]</scope>
    <source>
        <strain>Twist</strain>
    </source>
</reference>
<dbReference type="EMBL" id="AE014184">
    <property type="protein sequence ID" value="AAO44648.1"/>
    <property type="molecule type" value="Genomic_DNA"/>
</dbReference>
<dbReference type="RefSeq" id="WP_011096168.1">
    <property type="nucleotide sequence ID" value="NC_004572.3"/>
</dbReference>
<dbReference type="SMR" id="Q83FY9"/>
<dbReference type="STRING" id="203267.TWT_551"/>
<dbReference type="GeneID" id="67387986"/>
<dbReference type="KEGG" id="twh:TWT_551"/>
<dbReference type="eggNOG" id="COG0090">
    <property type="taxonomic scope" value="Bacteria"/>
</dbReference>
<dbReference type="HOGENOM" id="CLU_036235_2_1_11"/>
<dbReference type="OrthoDB" id="9778722at2"/>
<dbReference type="Proteomes" id="UP000002200">
    <property type="component" value="Chromosome"/>
</dbReference>
<dbReference type="GO" id="GO:0015934">
    <property type="term" value="C:large ribosomal subunit"/>
    <property type="evidence" value="ECO:0007669"/>
    <property type="project" value="InterPro"/>
</dbReference>
<dbReference type="GO" id="GO:0019843">
    <property type="term" value="F:rRNA binding"/>
    <property type="evidence" value="ECO:0007669"/>
    <property type="project" value="UniProtKB-UniRule"/>
</dbReference>
<dbReference type="GO" id="GO:0003735">
    <property type="term" value="F:structural constituent of ribosome"/>
    <property type="evidence" value="ECO:0007669"/>
    <property type="project" value="InterPro"/>
</dbReference>
<dbReference type="GO" id="GO:0016740">
    <property type="term" value="F:transferase activity"/>
    <property type="evidence" value="ECO:0007669"/>
    <property type="project" value="InterPro"/>
</dbReference>
<dbReference type="GO" id="GO:0002181">
    <property type="term" value="P:cytoplasmic translation"/>
    <property type="evidence" value="ECO:0007669"/>
    <property type="project" value="TreeGrafter"/>
</dbReference>
<dbReference type="FunFam" id="2.30.30.30:FF:000001">
    <property type="entry name" value="50S ribosomal protein L2"/>
    <property type="match status" value="1"/>
</dbReference>
<dbReference type="FunFam" id="2.40.50.140:FF:000003">
    <property type="entry name" value="50S ribosomal protein L2"/>
    <property type="match status" value="1"/>
</dbReference>
<dbReference type="FunFam" id="4.10.950.10:FF:000001">
    <property type="entry name" value="50S ribosomal protein L2"/>
    <property type="match status" value="1"/>
</dbReference>
<dbReference type="Gene3D" id="2.30.30.30">
    <property type="match status" value="1"/>
</dbReference>
<dbReference type="Gene3D" id="2.40.50.140">
    <property type="entry name" value="Nucleic acid-binding proteins"/>
    <property type="match status" value="1"/>
</dbReference>
<dbReference type="Gene3D" id="4.10.950.10">
    <property type="entry name" value="Ribosomal protein L2, domain 3"/>
    <property type="match status" value="1"/>
</dbReference>
<dbReference type="HAMAP" id="MF_01320_B">
    <property type="entry name" value="Ribosomal_uL2_B"/>
    <property type="match status" value="1"/>
</dbReference>
<dbReference type="InterPro" id="IPR012340">
    <property type="entry name" value="NA-bd_OB-fold"/>
</dbReference>
<dbReference type="InterPro" id="IPR014722">
    <property type="entry name" value="Rib_uL2_dom2"/>
</dbReference>
<dbReference type="InterPro" id="IPR002171">
    <property type="entry name" value="Ribosomal_uL2"/>
</dbReference>
<dbReference type="InterPro" id="IPR005880">
    <property type="entry name" value="Ribosomal_uL2_bac/org-type"/>
</dbReference>
<dbReference type="InterPro" id="IPR022669">
    <property type="entry name" value="Ribosomal_uL2_C"/>
</dbReference>
<dbReference type="InterPro" id="IPR022671">
    <property type="entry name" value="Ribosomal_uL2_CS"/>
</dbReference>
<dbReference type="InterPro" id="IPR014726">
    <property type="entry name" value="Ribosomal_uL2_dom3"/>
</dbReference>
<dbReference type="InterPro" id="IPR022666">
    <property type="entry name" value="Ribosomal_uL2_RNA-bd_dom"/>
</dbReference>
<dbReference type="InterPro" id="IPR008991">
    <property type="entry name" value="Translation_prot_SH3-like_sf"/>
</dbReference>
<dbReference type="NCBIfam" id="TIGR01171">
    <property type="entry name" value="rplB_bact"/>
    <property type="match status" value="1"/>
</dbReference>
<dbReference type="PANTHER" id="PTHR13691:SF5">
    <property type="entry name" value="LARGE RIBOSOMAL SUBUNIT PROTEIN UL2M"/>
    <property type="match status" value="1"/>
</dbReference>
<dbReference type="PANTHER" id="PTHR13691">
    <property type="entry name" value="RIBOSOMAL PROTEIN L2"/>
    <property type="match status" value="1"/>
</dbReference>
<dbReference type="Pfam" id="PF00181">
    <property type="entry name" value="Ribosomal_L2"/>
    <property type="match status" value="1"/>
</dbReference>
<dbReference type="Pfam" id="PF03947">
    <property type="entry name" value="Ribosomal_L2_C"/>
    <property type="match status" value="1"/>
</dbReference>
<dbReference type="PIRSF" id="PIRSF002158">
    <property type="entry name" value="Ribosomal_L2"/>
    <property type="match status" value="1"/>
</dbReference>
<dbReference type="SMART" id="SM01383">
    <property type="entry name" value="Ribosomal_L2"/>
    <property type="match status" value="1"/>
</dbReference>
<dbReference type="SMART" id="SM01382">
    <property type="entry name" value="Ribosomal_L2_C"/>
    <property type="match status" value="1"/>
</dbReference>
<dbReference type="SUPFAM" id="SSF50249">
    <property type="entry name" value="Nucleic acid-binding proteins"/>
    <property type="match status" value="1"/>
</dbReference>
<dbReference type="SUPFAM" id="SSF50104">
    <property type="entry name" value="Translation proteins SH3-like domain"/>
    <property type="match status" value="1"/>
</dbReference>
<dbReference type="PROSITE" id="PS00467">
    <property type="entry name" value="RIBOSOMAL_L2"/>
    <property type="match status" value="1"/>
</dbReference>